<comment type="function">
    <text evidence="1 3">Component of the small ribosomal subunit. The ribosome is a large ribonucleoprotein complex responsible for the synthesis of proteins in the cell. Part of the small subunit (SSU) processome, first precursor of the small eukaryotic ribosomal subunit. During the assembly of the SSU processome in the nucleolus, many ribosome biogenesis factors, an RNA chaperone and ribosomal proteins associate with the nascent pre-rRNA and work in concert to generate RNA folding, modifications, rearrangements and cleavage as well as targeted degradation of pre-ribosomal RNA by the RNA exosome (By similarity). May play a role during erythropoiesis (By similarity).</text>
</comment>
<comment type="subunit">
    <text evidence="1">Component of the small ribosomal subunit. Mature ribosomes consist of a small (40S) and a large (60S) subunit. The 40S subunit contains about 33 different proteins and 1 molecule of RNA (18S). The 60S subunit contains about 49 different proteins and 3 molecules of RNA (28S, 5.8S and 5S). Part of the small subunit (SSU) processome, composed of more than 70 proteins and the RNA chaperone small nucleolar RNA (snoRNA) U3.</text>
</comment>
<comment type="subcellular location">
    <subcellularLocation>
        <location evidence="2 3">Cytoplasm</location>
    </subcellularLocation>
    <subcellularLocation>
        <location evidence="2 3">Nucleus</location>
    </subcellularLocation>
    <subcellularLocation>
        <location evidence="1">Nucleus</location>
        <location evidence="1">Nucleolus</location>
    </subcellularLocation>
</comment>
<comment type="similarity">
    <text evidence="3">Belongs to the eukaryotic ribosomal protein eS1 family.</text>
</comment>
<protein>
    <recommendedName>
        <fullName evidence="3">Small ribosomal subunit protein eS1</fullName>
    </recommendedName>
    <alternativeName>
        <fullName evidence="5">40S ribosomal protein S3a</fullName>
    </alternativeName>
</protein>
<feature type="initiator methionine" description="Removed" evidence="3">
    <location>
        <position position="1"/>
    </location>
</feature>
<feature type="chain" id="PRO_0000389296" description="Small ribosomal subunit protein eS1">
    <location>
        <begin position="2"/>
        <end position="266"/>
    </location>
</feature>
<feature type="region of interest" description="Disordered" evidence="4">
    <location>
        <begin position="233"/>
        <end position="266"/>
    </location>
</feature>
<feature type="compositionally biased region" description="Basic and acidic residues" evidence="4">
    <location>
        <begin position="244"/>
        <end position="257"/>
    </location>
</feature>
<evidence type="ECO:0000250" key="1">
    <source>
        <dbReference type="UniProtKB" id="P61247"/>
    </source>
</evidence>
<evidence type="ECO:0000250" key="2">
    <source>
        <dbReference type="UniProtKB" id="P97351"/>
    </source>
</evidence>
<evidence type="ECO:0000255" key="3">
    <source>
        <dbReference type="HAMAP-Rule" id="MF_03122"/>
    </source>
</evidence>
<evidence type="ECO:0000256" key="4">
    <source>
        <dbReference type="SAM" id="MobiDB-lite"/>
    </source>
</evidence>
<evidence type="ECO:0000305" key="5"/>
<proteinExistence type="evidence at transcript level"/>
<reference key="1">
    <citation type="journal article" date="2010" name="BMC Genomics">
        <title>Salmo salar and Esox lucius full-length cDNA sequences reveal changes in evolutionary pressures on a post-tetraploidization genome.</title>
        <authorList>
            <person name="Leong J.S."/>
            <person name="Jantzen S.G."/>
            <person name="von Schalburg K.R."/>
            <person name="Cooper G.A."/>
            <person name="Messmer A.M."/>
            <person name="Liao N.Y."/>
            <person name="Munro S."/>
            <person name="Moore R."/>
            <person name="Holt R.A."/>
            <person name="Jones S.J."/>
            <person name="Davidson W.S."/>
            <person name="Koop B.F."/>
        </authorList>
    </citation>
    <scope>NUCLEOTIDE SEQUENCE [LARGE SCALE MRNA]</scope>
    <source>
        <tissue>Brain</tissue>
        <tissue>Spleen</tissue>
        <tissue>Thymus</tissue>
        <tissue>White muscle</tissue>
    </source>
</reference>
<dbReference type="EMBL" id="BT043775">
    <property type="protein sequence ID" value="ACH70890.1"/>
    <property type="molecule type" value="mRNA"/>
</dbReference>
<dbReference type="EMBL" id="BT046614">
    <property type="protein sequence ID" value="ACI66415.1"/>
    <property type="molecule type" value="mRNA"/>
</dbReference>
<dbReference type="EMBL" id="BT047242">
    <property type="protein sequence ID" value="ACI67043.1"/>
    <property type="molecule type" value="mRNA"/>
</dbReference>
<dbReference type="EMBL" id="BT049084">
    <property type="protein sequence ID" value="ACI68885.1"/>
    <property type="molecule type" value="mRNA"/>
</dbReference>
<dbReference type="EMBL" id="BT050098">
    <property type="protein sequence ID" value="ACI69899.1"/>
    <property type="molecule type" value="mRNA"/>
</dbReference>
<dbReference type="EMBL" id="BT058206">
    <property type="protein sequence ID" value="ACN09919.1"/>
    <property type="molecule type" value="mRNA"/>
</dbReference>
<dbReference type="EMBL" id="BT059906">
    <property type="protein sequence ID" value="ACN12266.1"/>
    <property type="molecule type" value="mRNA"/>
</dbReference>
<dbReference type="RefSeq" id="NP_001134789.1">
    <property type="nucleotide sequence ID" value="NM_001141317.2"/>
</dbReference>
<dbReference type="RefSeq" id="XP_014064854.1">
    <property type="nucleotide sequence ID" value="XM_014209379.2"/>
</dbReference>
<dbReference type="SMR" id="B5DGL6"/>
<dbReference type="STRING" id="8030.ENSSSAP00000052761"/>
<dbReference type="PaxDb" id="8030-ENSSSAP00000052761"/>
<dbReference type="Ensembl" id="ENSSSAT00020037524">
    <property type="protein sequence ID" value="ENSSSAP00020034119"/>
    <property type="gene ID" value="ENSSSAG00020013495"/>
</dbReference>
<dbReference type="Ensembl" id="ENSSSAT00070009817">
    <property type="protein sequence ID" value="ENSSSAP00070009244"/>
    <property type="gene ID" value="ENSSSAG00070006407"/>
</dbReference>
<dbReference type="Ensembl" id="ENSSSAT00070020467">
    <property type="protein sequence ID" value="ENSSSAP00070019480"/>
    <property type="gene ID" value="ENSSSAG00070012900"/>
</dbReference>
<dbReference type="GeneID" id="100196288"/>
<dbReference type="GeneID" id="106610183"/>
<dbReference type="KEGG" id="sasa:100196288"/>
<dbReference type="KEGG" id="sasa:106610183"/>
<dbReference type="CTD" id="100196288"/>
<dbReference type="CTD" id="6189"/>
<dbReference type="OrthoDB" id="355997at7898"/>
<dbReference type="Proteomes" id="UP000087266">
    <property type="component" value="Chromosome ssa04"/>
</dbReference>
<dbReference type="Proteomes" id="UP000087266">
    <property type="component" value="Chromosome ssa08"/>
</dbReference>
<dbReference type="Bgee" id="ENSSSAG00000069593">
    <property type="expression patterns" value="Expressed in spleen and 24 other cell types or tissues"/>
</dbReference>
<dbReference type="GO" id="GO:0022627">
    <property type="term" value="C:cytosolic small ribosomal subunit"/>
    <property type="evidence" value="ECO:0007669"/>
    <property type="project" value="UniProtKB-UniRule"/>
</dbReference>
<dbReference type="GO" id="GO:0005730">
    <property type="term" value="C:nucleolus"/>
    <property type="evidence" value="ECO:0007669"/>
    <property type="project" value="UniProtKB-SubCell"/>
</dbReference>
<dbReference type="GO" id="GO:0032040">
    <property type="term" value="C:small-subunit processome"/>
    <property type="evidence" value="ECO:0000250"/>
    <property type="project" value="UniProtKB"/>
</dbReference>
<dbReference type="GO" id="GO:0003735">
    <property type="term" value="F:structural constituent of ribosome"/>
    <property type="evidence" value="ECO:0007669"/>
    <property type="project" value="UniProtKB-UniRule"/>
</dbReference>
<dbReference type="GO" id="GO:0042274">
    <property type="term" value="P:ribosomal small subunit biogenesis"/>
    <property type="evidence" value="ECO:0000250"/>
    <property type="project" value="UniProtKB"/>
</dbReference>
<dbReference type="GO" id="GO:0006412">
    <property type="term" value="P:translation"/>
    <property type="evidence" value="ECO:0007669"/>
    <property type="project" value="UniProtKB-UniRule"/>
</dbReference>
<dbReference type="HAMAP" id="MF_03122">
    <property type="entry name" value="Ribosomal_eS1_euk"/>
    <property type="match status" value="1"/>
</dbReference>
<dbReference type="InterPro" id="IPR001593">
    <property type="entry name" value="Ribosomal_eS1"/>
</dbReference>
<dbReference type="InterPro" id="IPR018281">
    <property type="entry name" value="Ribosomal_eS1_CS"/>
</dbReference>
<dbReference type="InterPro" id="IPR027500">
    <property type="entry name" value="Ribosomal_eS1_euk"/>
</dbReference>
<dbReference type="PANTHER" id="PTHR11830">
    <property type="entry name" value="40S RIBOSOMAL PROTEIN S3A"/>
    <property type="match status" value="1"/>
</dbReference>
<dbReference type="Pfam" id="PF01015">
    <property type="entry name" value="Ribosomal_S3Ae"/>
    <property type="match status" value="1"/>
</dbReference>
<dbReference type="SMART" id="SM01397">
    <property type="entry name" value="Ribosomal_S3Ae"/>
    <property type="match status" value="1"/>
</dbReference>
<dbReference type="PROSITE" id="PS01191">
    <property type="entry name" value="RIBOSOMAL_S3AE"/>
    <property type="match status" value="1"/>
</dbReference>
<name>RS3A_SALSA</name>
<sequence>MAVGKNKRLTKGGKKGAKKKIVDPFSKKDWYDVKAPAMFNIRNIGKTLVSRTQGTRIASDGLKGRVFEVSLADLQNDEVAFRKFKLISEDVQGKNCLTNFHGMDLTRDKMCSMVKKWQTMIEAHVDVKTTDGYLLRLFCVGFTKKRTNQIRKTSYAQHQQVRQIRKKMMEIMTREVQTNDLKEVVNKLIPDSVGKDIEKACQSIYPLHDVYVRKVKMLKKPKFELGKLMELHGEGGGSSAAKPSGDDTGAKVDRADGYEPPIQETV</sequence>
<gene>
    <name type="primary">rps3a</name>
</gene>
<keyword id="KW-0963">Cytoplasm</keyword>
<keyword id="KW-0539">Nucleus</keyword>
<keyword id="KW-1185">Reference proteome</keyword>
<keyword id="KW-0687">Ribonucleoprotein</keyword>
<keyword id="KW-0689">Ribosomal protein</keyword>
<accession>B5DGL6</accession>
<organism>
    <name type="scientific">Salmo salar</name>
    <name type="common">Atlantic salmon</name>
    <dbReference type="NCBI Taxonomy" id="8030"/>
    <lineage>
        <taxon>Eukaryota</taxon>
        <taxon>Metazoa</taxon>
        <taxon>Chordata</taxon>
        <taxon>Craniata</taxon>
        <taxon>Vertebrata</taxon>
        <taxon>Euteleostomi</taxon>
        <taxon>Actinopterygii</taxon>
        <taxon>Neopterygii</taxon>
        <taxon>Teleostei</taxon>
        <taxon>Protacanthopterygii</taxon>
        <taxon>Salmoniformes</taxon>
        <taxon>Salmonidae</taxon>
        <taxon>Salmoninae</taxon>
        <taxon>Salmo</taxon>
    </lineage>
</organism>